<evidence type="ECO:0000250" key="1"/>
<evidence type="ECO:0000256" key="2">
    <source>
        <dbReference type="SAM" id="MobiDB-lite"/>
    </source>
</evidence>
<evidence type="ECO:0000305" key="3"/>
<protein>
    <recommendedName>
        <fullName>Ubiquitin-like protein ATG12</fullName>
    </recommendedName>
    <alternativeName>
        <fullName>Autophagy-related protein 12</fullName>
    </alternativeName>
</protein>
<proteinExistence type="inferred from homology"/>
<comment type="function">
    <text evidence="1">Ubiquitin-like protein involved in cytoplasm to vacuole transport (Cvt), autophagy vesicles formation, mitophagy, and nucleophagy. Conjugation with ATG5 through a ubiquitin-like conjugating system involving also ATG7 as an E1-like activating enzyme and ATG10 as an E2-like conjugating enzyme, is essential for its function. The ATG12-ATG5 conjugate functions as an E3-like enzyme which is required for lipidation of ATG8 and ATG8 association to the vesicle membranes (By similarity).</text>
</comment>
<comment type="subunit">
    <text evidence="1">Forms a conjugate with ATG5.</text>
</comment>
<comment type="subcellular location">
    <subcellularLocation>
        <location evidence="1">Preautophagosomal structure membrane</location>
        <topology evidence="1">Peripheral membrane protein</topology>
    </subcellularLocation>
</comment>
<comment type="similarity">
    <text evidence="3">Belongs to the ATG12 family.</text>
</comment>
<sequence length="181" mass="19118">MSSPPTRYTRNPQLRRPSLSTPTPPPPSSSSTAPASSSATPIPDDAPDADDNDGSPPSPDLPLTMSASVMLTQLPRDATAALATAGEFPADQKVVVRFKPVGGSAPALRKELCKISAAQRFEAVVAYLRRTLKVGNGESVFLYINSTFAPALDEIVGNLHRCFKDSNGQLNVSYSMTPAFG</sequence>
<dbReference type="EMBL" id="CM001235">
    <property type="protein sequence ID" value="EHA48856.1"/>
    <property type="molecule type" value="Genomic_DNA"/>
</dbReference>
<dbReference type="RefSeq" id="XP_003718440.1">
    <property type="nucleotide sequence ID" value="XM_003718392.1"/>
</dbReference>
<dbReference type="SMR" id="Q51P78"/>
<dbReference type="STRING" id="242507.Q51P78"/>
<dbReference type="EnsemblFungi" id="MGG_00598T0">
    <property type="protein sequence ID" value="MGG_00598T0"/>
    <property type="gene ID" value="MGG_00598"/>
</dbReference>
<dbReference type="GeneID" id="2674234"/>
<dbReference type="KEGG" id="mgr:MGG_00598"/>
<dbReference type="VEuPathDB" id="FungiDB:MGG_00598"/>
<dbReference type="eggNOG" id="KOG3439">
    <property type="taxonomic scope" value="Eukaryota"/>
</dbReference>
<dbReference type="HOGENOM" id="CLU_106795_1_2_1"/>
<dbReference type="InParanoid" id="Q51P78"/>
<dbReference type="OMA" id="DLPMNMS"/>
<dbReference type="PHI-base" id="PHI:2079"/>
<dbReference type="Proteomes" id="UP000009058">
    <property type="component" value="Chromosome 5"/>
</dbReference>
<dbReference type="GO" id="GO:0034274">
    <property type="term" value="C:Atg12-Atg5-Atg16 complex"/>
    <property type="evidence" value="ECO:0007669"/>
    <property type="project" value="TreeGrafter"/>
</dbReference>
<dbReference type="GO" id="GO:0000421">
    <property type="term" value="C:autophagosome membrane"/>
    <property type="evidence" value="ECO:0007669"/>
    <property type="project" value="TreeGrafter"/>
</dbReference>
<dbReference type="GO" id="GO:0034045">
    <property type="term" value="C:phagophore assembly site membrane"/>
    <property type="evidence" value="ECO:0007669"/>
    <property type="project" value="UniProtKB-SubCell"/>
</dbReference>
<dbReference type="GO" id="GO:0019776">
    <property type="term" value="F:Atg8-family ligase activity"/>
    <property type="evidence" value="ECO:0007669"/>
    <property type="project" value="TreeGrafter"/>
</dbReference>
<dbReference type="GO" id="GO:0000045">
    <property type="term" value="P:autophagosome assembly"/>
    <property type="evidence" value="ECO:0007669"/>
    <property type="project" value="InterPro"/>
</dbReference>
<dbReference type="GO" id="GO:0097352">
    <property type="term" value="P:autophagosome maturation"/>
    <property type="evidence" value="ECO:0007669"/>
    <property type="project" value="TreeGrafter"/>
</dbReference>
<dbReference type="GO" id="GO:0000422">
    <property type="term" value="P:autophagy of mitochondrion"/>
    <property type="evidence" value="ECO:0007669"/>
    <property type="project" value="TreeGrafter"/>
</dbReference>
<dbReference type="GO" id="GO:0061723">
    <property type="term" value="P:glycophagy"/>
    <property type="evidence" value="ECO:0007669"/>
    <property type="project" value="TreeGrafter"/>
</dbReference>
<dbReference type="GO" id="GO:0034727">
    <property type="term" value="P:piecemeal microautophagy of the nucleus"/>
    <property type="evidence" value="ECO:0007669"/>
    <property type="project" value="TreeGrafter"/>
</dbReference>
<dbReference type="GO" id="GO:0015031">
    <property type="term" value="P:protein transport"/>
    <property type="evidence" value="ECO:0007669"/>
    <property type="project" value="UniProtKB-KW"/>
</dbReference>
<dbReference type="CDD" id="cd01612">
    <property type="entry name" value="Ubl_ATG12"/>
    <property type="match status" value="1"/>
</dbReference>
<dbReference type="Gene3D" id="3.10.20.90">
    <property type="entry name" value="Phosphatidylinositol 3-kinase Catalytic Subunit, Chain A, domain 1"/>
    <property type="match status" value="1"/>
</dbReference>
<dbReference type="InterPro" id="IPR007242">
    <property type="entry name" value="Atg12"/>
</dbReference>
<dbReference type="InterPro" id="IPR029071">
    <property type="entry name" value="Ubiquitin-like_domsf"/>
</dbReference>
<dbReference type="PANTHER" id="PTHR13385">
    <property type="entry name" value="AUTOPHAGY PROTEIN 12"/>
    <property type="match status" value="1"/>
</dbReference>
<dbReference type="PANTHER" id="PTHR13385:SF0">
    <property type="entry name" value="UBIQUITIN-LIKE PROTEIN ATG12"/>
    <property type="match status" value="1"/>
</dbReference>
<dbReference type="Pfam" id="PF04110">
    <property type="entry name" value="APG12"/>
    <property type="match status" value="1"/>
</dbReference>
<dbReference type="SUPFAM" id="SSF54236">
    <property type="entry name" value="Ubiquitin-like"/>
    <property type="match status" value="1"/>
</dbReference>
<reference key="1">
    <citation type="journal article" date="2005" name="Nature">
        <title>The genome sequence of the rice blast fungus Magnaporthe grisea.</title>
        <authorList>
            <person name="Dean R.A."/>
            <person name="Talbot N.J."/>
            <person name="Ebbole D.J."/>
            <person name="Farman M.L."/>
            <person name="Mitchell T.K."/>
            <person name="Orbach M.J."/>
            <person name="Thon M.R."/>
            <person name="Kulkarni R."/>
            <person name="Xu J.-R."/>
            <person name="Pan H."/>
            <person name="Read N.D."/>
            <person name="Lee Y.-H."/>
            <person name="Carbone I."/>
            <person name="Brown D."/>
            <person name="Oh Y.Y."/>
            <person name="Donofrio N."/>
            <person name="Jeong J.S."/>
            <person name="Soanes D.M."/>
            <person name="Djonovic S."/>
            <person name="Kolomiets E."/>
            <person name="Rehmeyer C."/>
            <person name="Li W."/>
            <person name="Harding M."/>
            <person name="Kim S."/>
            <person name="Lebrun M.-H."/>
            <person name="Bohnert H."/>
            <person name="Coughlan S."/>
            <person name="Butler J."/>
            <person name="Calvo S.E."/>
            <person name="Ma L.-J."/>
            <person name="Nicol R."/>
            <person name="Purcell S."/>
            <person name="Nusbaum C."/>
            <person name="Galagan J.E."/>
            <person name="Birren B.W."/>
        </authorList>
    </citation>
    <scope>NUCLEOTIDE SEQUENCE [LARGE SCALE GENOMIC DNA]</scope>
    <source>
        <strain>70-15 / ATCC MYA-4617 / FGSC 8958</strain>
    </source>
</reference>
<organism>
    <name type="scientific">Pyricularia oryzae (strain 70-15 / ATCC MYA-4617 / FGSC 8958)</name>
    <name type="common">Rice blast fungus</name>
    <name type="synonym">Magnaporthe oryzae</name>
    <dbReference type="NCBI Taxonomy" id="242507"/>
    <lineage>
        <taxon>Eukaryota</taxon>
        <taxon>Fungi</taxon>
        <taxon>Dikarya</taxon>
        <taxon>Ascomycota</taxon>
        <taxon>Pezizomycotina</taxon>
        <taxon>Sordariomycetes</taxon>
        <taxon>Sordariomycetidae</taxon>
        <taxon>Magnaporthales</taxon>
        <taxon>Pyriculariaceae</taxon>
        <taxon>Pyricularia</taxon>
    </lineage>
</organism>
<accession>Q51P78</accession>
<accession>A4REQ6</accession>
<accession>G4NB95</accession>
<keyword id="KW-0072">Autophagy</keyword>
<keyword id="KW-1017">Isopeptide bond</keyword>
<keyword id="KW-0472">Membrane</keyword>
<keyword id="KW-0653">Protein transport</keyword>
<keyword id="KW-1185">Reference proteome</keyword>
<keyword id="KW-0813">Transport</keyword>
<keyword id="KW-0833">Ubl conjugation pathway</keyword>
<feature type="chain" id="PRO_0000212481" description="Ubiquitin-like protein ATG12">
    <location>
        <begin position="1"/>
        <end position="181"/>
    </location>
</feature>
<feature type="region of interest" description="Disordered" evidence="2">
    <location>
        <begin position="1"/>
        <end position="64"/>
    </location>
</feature>
<feature type="compositionally biased region" description="Polar residues" evidence="2">
    <location>
        <begin position="1"/>
        <end position="12"/>
    </location>
</feature>
<feature type="compositionally biased region" description="Low complexity" evidence="2">
    <location>
        <begin position="29"/>
        <end position="43"/>
    </location>
</feature>
<feature type="cross-link" description="Glycyl lysine isopeptide (Gly-Lys) (interchain with K-162 in ATG5)" evidence="1">
    <location>
        <position position="181"/>
    </location>
</feature>
<name>ATG12_PYRO7</name>
<gene>
    <name type="primary">ATG12</name>
    <name type="ORF">MGG_00598</name>
</gene>